<feature type="chain" id="PRO_0000319233" description="Formate-dependent phosphoribosylglycinamide formyltransferase">
    <location>
        <begin position="1"/>
        <end position="391"/>
    </location>
</feature>
<feature type="domain" description="ATP-grasp" evidence="1">
    <location>
        <begin position="117"/>
        <end position="306"/>
    </location>
</feature>
<feature type="binding site" evidence="1">
    <location>
        <begin position="20"/>
        <end position="21"/>
    </location>
    <ligand>
        <name>N(1)-(5-phospho-beta-D-ribosyl)glycinamide</name>
        <dbReference type="ChEBI" id="CHEBI:143788"/>
    </ligand>
</feature>
<feature type="binding site" evidence="1">
    <location>
        <position position="80"/>
    </location>
    <ligand>
        <name>N(1)-(5-phospho-beta-D-ribosyl)glycinamide</name>
        <dbReference type="ChEBI" id="CHEBI:143788"/>
    </ligand>
</feature>
<feature type="binding site" evidence="1">
    <location>
        <position position="112"/>
    </location>
    <ligand>
        <name>ATP</name>
        <dbReference type="ChEBI" id="CHEBI:30616"/>
    </ligand>
</feature>
<feature type="binding site" evidence="1">
    <location>
        <position position="153"/>
    </location>
    <ligand>
        <name>ATP</name>
        <dbReference type="ChEBI" id="CHEBI:30616"/>
    </ligand>
</feature>
<feature type="binding site" evidence="1">
    <location>
        <begin position="158"/>
        <end position="163"/>
    </location>
    <ligand>
        <name>ATP</name>
        <dbReference type="ChEBI" id="CHEBI:30616"/>
    </ligand>
</feature>
<feature type="binding site" evidence="1">
    <location>
        <begin position="193"/>
        <end position="196"/>
    </location>
    <ligand>
        <name>ATP</name>
        <dbReference type="ChEBI" id="CHEBI:30616"/>
    </ligand>
</feature>
<feature type="binding site" evidence="1">
    <location>
        <position position="201"/>
    </location>
    <ligand>
        <name>ATP</name>
        <dbReference type="ChEBI" id="CHEBI:30616"/>
    </ligand>
</feature>
<feature type="binding site" evidence="1">
    <location>
        <position position="265"/>
    </location>
    <ligand>
        <name>Mg(2+)</name>
        <dbReference type="ChEBI" id="CHEBI:18420"/>
    </ligand>
</feature>
<feature type="binding site" evidence="1">
    <location>
        <position position="277"/>
    </location>
    <ligand>
        <name>Mg(2+)</name>
        <dbReference type="ChEBI" id="CHEBI:18420"/>
    </ligand>
</feature>
<feature type="binding site" evidence="1">
    <location>
        <position position="284"/>
    </location>
    <ligand>
        <name>N(1)-(5-phospho-beta-D-ribosyl)glycinamide</name>
        <dbReference type="ChEBI" id="CHEBI:143788"/>
    </ligand>
</feature>
<feature type="binding site" evidence="1">
    <location>
        <position position="354"/>
    </location>
    <ligand>
        <name>N(1)-(5-phospho-beta-D-ribosyl)glycinamide</name>
        <dbReference type="ChEBI" id="CHEBI:143788"/>
    </ligand>
</feature>
<feature type="binding site" evidence="1">
    <location>
        <begin position="361"/>
        <end position="362"/>
    </location>
    <ligand>
        <name>N(1)-(5-phospho-beta-D-ribosyl)glycinamide</name>
        <dbReference type="ChEBI" id="CHEBI:143788"/>
    </ligand>
</feature>
<dbReference type="EC" id="6.3.1.21" evidence="1"/>
<dbReference type="EMBL" id="CP000681">
    <property type="protein sequence ID" value="ABP74730.1"/>
    <property type="molecule type" value="Genomic_DNA"/>
</dbReference>
<dbReference type="SMR" id="A4Y447"/>
<dbReference type="STRING" id="319224.Sputcn32_1001"/>
<dbReference type="KEGG" id="spc:Sputcn32_1001"/>
<dbReference type="eggNOG" id="COG0027">
    <property type="taxonomic scope" value="Bacteria"/>
</dbReference>
<dbReference type="HOGENOM" id="CLU_011534_1_3_6"/>
<dbReference type="UniPathway" id="UPA00074">
    <property type="reaction ID" value="UER00127"/>
</dbReference>
<dbReference type="GO" id="GO:0005829">
    <property type="term" value="C:cytosol"/>
    <property type="evidence" value="ECO:0007669"/>
    <property type="project" value="TreeGrafter"/>
</dbReference>
<dbReference type="GO" id="GO:0005524">
    <property type="term" value="F:ATP binding"/>
    <property type="evidence" value="ECO:0007669"/>
    <property type="project" value="UniProtKB-UniRule"/>
</dbReference>
<dbReference type="GO" id="GO:0000287">
    <property type="term" value="F:magnesium ion binding"/>
    <property type="evidence" value="ECO:0007669"/>
    <property type="project" value="InterPro"/>
</dbReference>
<dbReference type="GO" id="GO:0043815">
    <property type="term" value="F:phosphoribosylglycinamide formyltransferase 2 activity"/>
    <property type="evidence" value="ECO:0007669"/>
    <property type="project" value="UniProtKB-UniRule"/>
</dbReference>
<dbReference type="GO" id="GO:0004644">
    <property type="term" value="F:phosphoribosylglycinamide formyltransferase activity"/>
    <property type="evidence" value="ECO:0007669"/>
    <property type="project" value="InterPro"/>
</dbReference>
<dbReference type="GO" id="GO:0006189">
    <property type="term" value="P:'de novo' IMP biosynthetic process"/>
    <property type="evidence" value="ECO:0007669"/>
    <property type="project" value="UniProtKB-UniRule"/>
</dbReference>
<dbReference type="FunFam" id="3.30.1490.20:FF:000013">
    <property type="entry name" value="Formate-dependent phosphoribosylglycinamide formyltransferase"/>
    <property type="match status" value="1"/>
</dbReference>
<dbReference type="FunFam" id="3.30.470.20:FF:000027">
    <property type="entry name" value="Formate-dependent phosphoribosylglycinamide formyltransferase"/>
    <property type="match status" value="1"/>
</dbReference>
<dbReference type="FunFam" id="3.40.50.20:FF:000007">
    <property type="entry name" value="Formate-dependent phosphoribosylglycinamide formyltransferase"/>
    <property type="match status" value="1"/>
</dbReference>
<dbReference type="Gene3D" id="3.40.50.20">
    <property type="match status" value="1"/>
</dbReference>
<dbReference type="Gene3D" id="3.30.1490.20">
    <property type="entry name" value="ATP-grasp fold, A domain"/>
    <property type="match status" value="1"/>
</dbReference>
<dbReference type="Gene3D" id="3.30.470.20">
    <property type="entry name" value="ATP-grasp fold, B domain"/>
    <property type="match status" value="1"/>
</dbReference>
<dbReference type="HAMAP" id="MF_01643">
    <property type="entry name" value="PurT"/>
    <property type="match status" value="1"/>
</dbReference>
<dbReference type="InterPro" id="IPR011761">
    <property type="entry name" value="ATP-grasp"/>
</dbReference>
<dbReference type="InterPro" id="IPR003135">
    <property type="entry name" value="ATP-grasp_carboxylate-amine"/>
</dbReference>
<dbReference type="InterPro" id="IPR013815">
    <property type="entry name" value="ATP_grasp_subdomain_1"/>
</dbReference>
<dbReference type="InterPro" id="IPR016185">
    <property type="entry name" value="PreATP-grasp_dom_sf"/>
</dbReference>
<dbReference type="InterPro" id="IPR005862">
    <property type="entry name" value="PurT"/>
</dbReference>
<dbReference type="InterPro" id="IPR054350">
    <property type="entry name" value="PurT/PurK_preATP-grasp"/>
</dbReference>
<dbReference type="InterPro" id="IPR048740">
    <property type="entry name" value="PurT_C"/>
</dbReference>
<dbReference type="InterPro" id="IPR011054">
    <property type="entry name" value="Rudment_hybrid_motif"/>
</dbReference>
<dbReference type="NCBIfam" id="NF006766">
    <property type="entry name" value="PRK09288.1"/>
    <property type="match status" value="1"/>
</dbReference>
<dbReference type="NCBIfam" id="TIGR01142">
    <property type="entry name" value="purT"/>
    <property type="match status" value="1"/>
</dbReference>
<dbReference type="PANTHER" id="PTHR43055">
    <property type="entry name" value="FORMATE-DEPENDENT PHOSPHORIBOSYLGLYCINAMIDE FORMYLTRANSFERASE"/>
    <property type="match status" value="1"/>
</dbReference>
<dbReference type="PANTHER" id="PTHR43055:SF1">
    <property type="entry name" value="FORMATE-DEPENDENT PHOSPHORIBOSYLGLYCINAMIDE FORMYLTRANSFERASE"/>
    <property type="match status" value="1"/>
</dbReference>
<dbReference type="Pfam" id="PF02222">
    <property type="entry name" value="ATP-grasp"/>
    <property type="match status" value="1"/>
</dbReference>
<dbReference type="Pfam" id="PF21244">
    <property type="entry name" value="PurT_C"/>
    <property type="match status" value="1"/>
</dbReference>
<dbReference type="Pfam" id="PF22660">
    <property type="entry name" value="RS_preATP-grasp-like"/>
    <property type="match status" value="1"/>
</dbReference>
<dbReference type="SUPFAM" id="SSF56059">
    <property type="entry name" value="Glutathione synthetase ATP-binding domain-like"/>
    <property type="match status" value="1"/>
</dbReference>
<dbReference type="SUPFAM" id="SSF52440">
    <property type="entry name" value="PreATP-grasp domain"/>
    <property type="match status" value="1"/>
</dbReference>
<dbReference type="SUPFAM" id="SSF51246">
    <property type="entry name" value="Rudiment single hybrid motif"/>
    <property type="match status" value="1"/>
</dbReference>
<dbReference type="PROSITE" id="PS50975">
    <property type="entry name" value="ATP_GRASP"/>
    <property type="match status" value="1"/>
</dbReference>
<name>PURT_SHEPC</name>
<accession>A4Y447</accession>
<reference key="1">
    <citation type="submission" date="2007-04" db="EMBL/GenBank/DDBJ databases">
        <title>Complete sequence of Shewanella putrefaciens CN-32.</title>
        <authorList>
            <consortium name="US DOE Joint Genome Institute"/>
            <person name="Copeland A."/>
            <person name="Lucas S."/>
            <person name="Lapidus A."/>
            <person name="Barry K."/>
            <person name="Detter J.C."/>
            <person name="Glavina del Rio T."/>
            <person name="Hammon N."/>
            <person name="Israni S."/>
            <person name="Dalin E."/>
            <person name="Tice H."/>
            <person name="Pitluck S."/>
            <person name="Chain P."/>
            <person name="Malfatti S."/>
            <person name="Shin M."/>
            <person name="Vergez L."/>
            <person name="Schmutz J."/>
            <person name="Larimer F."/>
            <person name="Land M."/>
            <person name="Hauser L."/>
            <person name="Kyrpides N."/>
            <person name="Mikhailova N."/>
            <person name="Romine M.F."/>
            <person name="Fredrickson J."/>
            <person name="Tiedje J."/>
            <person name="Richardson P."/>
        </authorList>
    </citation>
    <scope>NUCLEOTIDE SEQUENCE [LARGE SCALE GENOMIC DNA]</scope>
    <source>
        <strain>CN-32 / ATCC BAA-453</strain>
    </source>
</reference>
<keyword id="KW-0067">ATP-binding</keyword>
<keyword id="KW-0436">Ligase</keyword>
<keyword id="KW-0460">Magnesium</keyword>
<keyword id="KW-0479">Metal-binding</keyword>
<keyword id="KW-0547">Nucleotide-binding</keyword>
<keyword id="KW-0658">Purine biosynthesis</keyword>
<protein>
    <recommendedName>
        <fullName evidence="1">Formate-dependent phosphoribosylglycinamide formyltransferase</fullName>
        <ecNumber evidence="1">6.3.1.21</ecNumber>
    </recommendedName>
    <alternativeName>
        <fullName evidence="1">5'-phosphoribosylglycinamide transformylase 2</fullName>
    </alternativeName>
    <alternativeName>
        <fullName evidence="1">Formate-dependent GAR transformylase</fullName>
    </alternativeName>
    <alternativeName>
        <fullName evidence="1">GAR transformylase 2</fullName>
        <shortName evidence="1">GART 2</shortName>
    </alternativeName>
    <alternativeName>
        <fullName evidence="1">Non-folate glycinamide ribonucleotide transformylase</fullName>
    </alternativeName>
    <alternativeName>
        <fullName evidence="1">Phosphoribosylglycinamide formyltransferase 2</fullName>
    </alternativeName>
</protein>
<comment type="function">
    <text evidence="1">Involved in the de novo purine biosynthesis. Catalyzes the transfer of formate to 5-phospho-ribosyl-glycinamide (GAR), producing 5-phospho-ribosyl-N-formylglycinamide (FGAR). Formate is provided by PurU via hydrolysis of 10-formyl-tetrahydrofolate.</text>
</comment>
<comment type="catalytic activity">
    <reaction evidence="1">
        <text>N(1)-(5-phospho-beta-D-ribosyl)glycinamide + formate + ATP = N(2)-formyl-N(1)-(5-phospho-beta-D-ribosyl)glycinamide + ADP + phosphate + H(+)</text>
        <dbReference type="Rhea" id="RHEA:24829"/>
        <dbReference type="ChEBI" id="CHEBI:15378"/>
        <dbReference type="ChEBI" id="CHEBI:15740"/>
        <dbReference type="ChEBI" id="CHEBI:30616"/>
        <dbReference type="ChEBI" id="CHEBI:43474"/>
        <dbReference type="ChEBI" id="CHEBI:143788"/>
        <dbReference type="ChEBI" id="CHEBI:147286"/>
        <dbReference type="ChEBI" id="CHEBI:456216"/>
        <dbReference type="EC" id="6.3.1.21"/>
    </reaction>
    <physiologicalReaction direction="left-to-right" evidence="1">
        <dbReference type="Rhea" id="RHEA:24830"/>
    </physiologicalReaction>
</comment>
<comment type="pathway">
    <text evidence="1">Purine metabolism; IMP biosynthesis via de novo pathway; N(2)-formyl-N(1)-(5-phospho-D-ribosyl)glycinamide from N(1)-(5-phospho-D-ribosyl)glycinamide (formate route): step 1/1.</text>
</comment>
<comment type="subunit">
    <text evidence="1">Homodimer.</text>
</comment>
<comment type="similarity">
    <text evidence="1">Belongs to the PurK/PurT family.</text>
</comment>
<organism>
    <name type="scientific">Shewanella putrefaciens (strain CN-32 / ATCC BAA-453)</name>
    <dbReference type="NCBI Taxonomy" id="319224"/>
    <lineage>
        <taxon>Bacteria</taxon>
        <taxon>Pseudomonadati</taxon>
        <taxon>Pseudomonadota</taxon>
        <taxon>Gammaproteobacteria</taxon>
        <taxon>Alteromonadales</taxon>
        <taxon>Shewanellaceae</taxon>
        <taxon>Shewanella</taxon>
    </lineage>
</organism>
<proteinExistence type="inferred from homology"/>
<evidence type="ECO:0000255" key="1">
    <source>
        <dbReference type="HAMAP-Rule" id="MF_01643"/>
    </source>
</evidence>
<gene>
    <name evidence="1" type="primary">purT</name>
    <name type="ordered locus">Sputcn32_1001</name>
</gene>
<sequence length="391" mass="42267">MIGTPYTEGARRAMLLGCGELGKEVAIELQRLGVEVIGVDRYANAPAMQVAHRSHVINMLDAKALRAIIELEKPHLVIPEIEAIATQTLVEMEAEGVNIIPTARATKLTMDREGIRRLAAETLGLPTSPYFFCDTETEFNQAIREIGVPCVVKPVMSSSGKGQSVIRDIALSHKAWQYAQEGGRAGGGRVIVEGFVPFDYEITLLTVSAVNGIHFCAPIGHRQEDGDYRESWQPQAMSDEVLAKSQAIASKVVEALGGYGLFGVELFVKGHEVYFSEVSPRPHDTGLVTLISQDLSEFALHVRAILGLPIPNIHQHGPSASAVILAEGTSSNIRYQGIGAALEAVNTQLRLFAKPDIDGRRRLGVALARDIDIDSAISKALDSASKVKVIF</sequence>